<keyword id="KW-0029">Amino-acid transport</keyword>
<keyword id="KW-0997">Cell inner membrane</keyword>
<keyword id="KW-1003">Cell membrane</keyword>
<keyword id="KW-0472">Membrane</keyword>
<keyword id="KW-1185">Reference proteome</keyword>
<keyword id="KW-0769">Symport</keyword>
<keyword id="KW-0812">Transmembrane</keyword>
<keyword id="KW-1133">Transmembrane helix</keyword>
<keyword id="KW-0813">Transport</keyword>
<name>TDCC_ECO57</name>
<accession>P0AAD9</accession>
<accession>P11867</accession>
<sequence>MSTSDSIVSSQTKQSSWRKSDTTWTLGLFGTAIGAGVLFFPIRAGFGGLIPILLMLVLAYPIAFYCHRALARLCLSGSNPSGNITETVEEHFGKTGGVVITFLYFFAICPLLWIYGVTITNTFMTFWENQLGFAPLNRGFVALFLLLLMAFVIWFGKDLMVKVMSYLVWPFIASLVLISLSLIPYWNSAVIDQVDLGSLSLTGHDGILITVWLGISIMVFSFNFSPIVSSFVVSKREEYEKDFGRDFTERKCSQIISRASMLMVAVVMFFAFSCLFTLSPANMAEAKAQNIPVLSYLANHFASMTGTKTTFAITLEYAASIIALVAIFKSFFGHYLGTLEGLNGLVLKFGYKGDKTKVSLGKLNTISMIFIMGSTWVVAYANPNILDLIEAMGAPIIASLLCLLPMYAIRKAPSLAKYRGRLDNVFVTVIGLLTILNIVYKLF</sequence>
<evidence type="ECO:0000255" key="1">
    <source>
        <dbReference type="HAMAP-Rule" id="MF_01583"/>
    </source>
</evidence>
<gene>
    <name evidence="1" type="primary">tdcC</name>
    <name type="ordered locus">Z4468</name>
    <name type="ordered locus">ECs3996</name>
</gene>
<reference key="1">
    <citation type="journal article" date="2001" name="Nature">
        <title>Genome sequence of enterohaemorrhagic Escherichia coli O157:H7.</title>
        <authorList>
            <person name="Perna N.T."/>
            <person name="Plunkett G. III"/>
            <person name="Burland V."/>
            <person name="Mau B."/>
            <person name="Glasner J.D."/>
            <person name="Rose D.J."/>
            <person name="Mayhew G.F."/>
            <person name="Evans P.S."/>
            <person name="Gregor J."/>
            <person name="Kirkpatrick H.A."/>
            <person name="Posfai G."/>
            <person name="Hackett J."/>
            <person name="Klink S."/>
            <person name="Boutin A."/>
            <person name="Shao Y."/>
            <person name="Miller L."/>
            <person name="Grotbeck E.J."/>
            <person name="Davis N.W."/>
            <person name="Lim A."/>
            <person name="Dimalanta E.T."/>
            <person name="Potamousis K."/>
            <person name="Apodaca J."/>
            <person name="Anantharaman T.S."/>
            <person name="Lin J."/>
            <person name="Yen G."/>
            <person name="Schwartz D.C."/>
            <person name="Welch R.A."/>
            <person name="Blattner F.R."/>
        </authorList>
    </citation>
    <scope>NUCLEOTIDE SEQUENCE [LARGE SCALE GENOMIC DNA]</scope>
    <source>
        <strain>O157:H7 / EDL933 / ATCC 700927 / EHEC</strain>
    </source>
</reference>
<reference key="2">
    <citation type="journal article" date="2001" name="DNA Res.">
        <title>Complete genome sequence of enterohemorrhagic Escherichia coli O157:H7 and genomic comparison with a laboratory strain K-12.</title>
        <authorList>
            <person name="Hayashi T."/>
            <person name="Makino K."/>
            <person name="Ohnishi M."/>
            <person name="Kurokawa K."/>
            <person name="Ishii K."/>
            <person name="Yokoyama K."/>
            <person name="Han C.-G."/>
            <person name="Ohtsubo E."/>
            <person name="Nakayama K."/>
            <person name="Murata T."/>
            <person name="Tanaka M."/>
            <person name="Tobe T."/>
            <person name="Iida T."/>
            <person name="Takami H."/>
            <person name="Honda T."/>
            <person name="Sasakawa C."/>
            <person name="Ogasawara N."/>
            <person name="Yasunaga T."/>
            <person name="Kuhara S."/>
            <person name="Shiba T."/>
            <person name="Hattori M."/>
            <person name="Shinagawa H."/>
        </authorList>
    </citation>
    <scope>NUCLEOTIDE SEQUENCE [LARGE SCALE GENOMIC DNA]</scope>
    <source>
        <strain>O157:H7 / Sakai / RIMD 0509952 / EHEC</strain>
    </source>
</reference>
<protein>
    <recommendedName>
        <fullName evidence="1">Threonine/serine transporter TdcC</fullName>
    </recommendedName>
    <alternativeName>
        <fullName evidence="1">H(+)/threonine-serine symporter</fullName>
    </alternativeName>
</protein>
<organism>
    <name type="scientific">Escherichia coli O157:H7</name>
    <dbReference type="NCBI Taxonomy" id="83334"/>
    <lineage>
        <taxon>Bacteria</taxon>
        <taxon>Pseudomonadati</taxon>
        <taxon>Pseudomonadota</taxon>
        <taxon>Gammaproteobacteria</taxon>
        <taxon>Enterobacterales</taxon>
        <taxon>Enterobacteriaceae</taxon>
        <taxon>Escherichia</taxon>
    </lineage>
</organism>
<dbReference type="EMBL" id="AE005174">
    <property type="protein sequence ID" value="AAG58247.1"/>
    <property type="molecule type" value="Genomic_DNA"/>
</dbReference>
<dbReference type="EMBL" id="BA000007">
    <property type="protein sequence ID" value="BAB37419.1"/>
    <property type="molecule type" value="Genomic_DNA"/>
</dbReference>
<dbReference type="PIR" id="C85973">
    <property type="entry name" value="C85973"/>
</dbReference>
<dbReference type="PIR" id="D91128">
    <property type="entry name" value="D91128"/>
</dbReference>
<dbReference type="RefSeq" id="NP_312023.1">
    <property type="nucleotide sequence ID" value="NC_002695.1"/>
</dbReference>
<dbReference type="RefSeq" id="WP_000107723.1">
    <property type="nucleotide sequence ID" value="NZ_VOAI01000009.1"/>
</dbReference>
<dbReference type="SMR" id="P0AAD9"/>
<dbReference type="STRING" id="155864.Z4468"/>
<dbReference type="GeneID" id="916533"/>
<dbReference type="GeneID" id="93778869"/>
<dbReference type="KEGG" id="ece:Z4468"/>
<dbReference type="KEGG" id="ecs:ECs_3996"/>
<dbReference type="PATRIC" id="fig|386585.9.peg.4170"/>
<dbReference type="eggNOG" id="COG0814">
    <property type="taxonomic scope" value="Bacteria"/>
</dbReference>
<dbReference type="HOGENOM" id="CLU_052043_1_1_6"/>
<dbReference type="OMA" id="SPQNMAE"/>
<dbReference type="Proteomes" id="UP000000558">
    <property type="component" value="Chromosome"/>
</dbReference>
<dbReference type="Proteomes" id="UP000002519">
    <property type="component" value="Chromosome"/>
</dbReference>
<dbReference type="GO" id="GO:0005886">
    <property type="term" value="C:plasma membrane"/>
    <property type="evidence" value="ECO:0007669"/>
    <property type="project" value="UniProtKB-SubCell"/>
</dbReference>
<dbReference type="GO" id="GO:0015194">
    <property type="term" value="F:L-serine transmembrane transporter activity"/>
    <property type="evidence" value="ECO:0007669"/>
    <property type="project" value="InterPro"/>
</dbReference>
<dbReference type="GO" id="GO:0015293">
    <property type="term" value="F:symporter activity"/>
    <property type="evidence" value="ECO:0007669"/>
    <property type="project" value="UniProtKB-UniRule"/>
</dbReference>
<dbReference type="GO" id="GO:0015565">
    <property type="term" value="F:threonine efflux transmembrane transporter activity"/>
    <property type="evidence" value="ECO:0007669"/>
    <property type="project" value="InterPro"/>
</dbReference>
<dbReference type="HAMAP" id="MF_01583">
    <property type="entry name" value="Thr_Ser_transp_TdcC"/>
    <property type="match status" value="1"/>
</dbReference>
<dbReference type="InterPro" id="IPR018227">
    <property type="entry name" value="Amino_acid_transport_2"/>
</dbReference>
<dbReference type="InterPro" id="IPR004694">
    <property type="entry name" value="Hydroxy_aa_transpt"/>
</dbReference>
<dbReference type="InterPro" id="IPR023726">
    <property type="entry name" value="Thr/Ser_transpt_TdcC"/>
</dbReference>
<dbReference type="NCBIfam" id="NF010152">
    <property type="entry name" value="PRK13629.1"/>
    <property type="match status" value="1"/>
</dbReference>
<dbReference type="NCBIfam" id="TIGR00814">
    <property type="entry name" value="stp"/>
    <property type="match status" value="1"/>
</dbReference>
<dbReference type="PANTHER" id="PTHR35334">
    <property type="entry name" value="SERINE TRANSPORTER"/>
    <property type="match status" value="1"/>
</dbReference>
<dbReference type="PANTHER" id="PTHR35334:SF1">
    <property type="entry name" value="THREONINE_SERINE TRANSPORTER TDCC"/>
    <property type="match status" value="1"/>
</dbReference>
<dbReference type="Pfam" id="PF03222">
    <property type="entry name" value="Trp_Tyr_perm"/>
    <property type="match status" value="1"/>
</dbReference>
<comment type="function">
    <text evidence="1">Involved in the import of threonine and serine into the cell, with the concomitant import of a proton (symport system).</text>
</comment>
<comment type="catalytic activity">
    <reaction evidence="1">
        <text>L-threonine(in) + H(+)(in) = L-threonine(out) + H(+)(out)</text>
        <dbReference type="Rhea" id="RHEA:28883"/>
        <dbReference type="ChEBI" id="CHEBI:15378"/>
        <dbReference type="ChEBI" id="CHEBI:57926"/>
    </reaction>
    <physiologicalReaction direction="right-to-left" evidence="1">
        <dbReference type="Rhea" id="RHEA:28885"/>
    </physiologicalReaction>
</comment>
<comment type="catalytic activity">
    <reaction evidence="1">
        <text>L-serine(in) + H(+)(in) = L-serine(out) + H(+)(out)</text>
        <dbReference type="Rhea" id="RHEA:28887"/>
        <dbReference type="ChEBI" id="CHEBI:15378"/>
        <dbReference type="ChEBI" id="CHEBI:33384"/>
    </reaction>
    <physiologicalReaction direction="right-to-left" evidence="1">
        <dbReference type="Rhea" id="RHEA:28889"/>
    </physiologicalReaction>
</comment>
<comment type="subcellular location">
    <subcellularLocation>
        <location evidence="1">Cell inner membrane</location>
        <topology evidence="1">Multi-pass membrane protein</topology>
    </subcellularLocation>
</comment>
<comment type="similarity">
    <text evidence="1">Belongs to the amino acid/polyamine transporter 2 family. SdaC/TdcC subfamily.</text>
</comment>
<feature type="chain" id="PRO_0000093813" description="Threonine/serine transporter TdcC">
    <location>
        <begin position="1"/>
        <end position="443"/>
    </location>
</feature>
<feature type="transmembrane region" description="Helical" evidence="1">
    <location>
        <begin position="22"/>
        <end position="42"/>
    </location>
</feature>
<feature type="transmembrane region" description="Helical" evidence="1">
    <location>
        <begin position="44"/>
        <end position="64"/>
    </location>
</feature>
<feature type="transmembrane region" description="Helical" evidence="1">
    <location>
        <begin position="97"/>
        <end position="117"/>
    </location>
</feature>
<feature type="transmembrane region" description="Helical" evidence="1">
    <location>
        <begin position="140"/>
        <end position="160"/>
    </location>
</feature>
<feature type="transmembrane region" description="Helical" evidence="1">
    <location>
        <begin position="163"/>
        <end position="183"/>
    </location>
</feature>
<feature type="transmembrane region" description="Helical" evidence="1">
    <location>
        <begin position="207"/>
        <end position="227"/>
    </location>
</feature>
<feature type="transmembrane region" description="Helical" evidence="1">
    <location>
        <begin position="261"/>
        <end position="281"/>
    </location>
</feature>
<feature type="transmembrane region" description="Helical" evidence="1">
    <location>
        <begin position="311"/>
        <end position="331"/>
    </location>
</feature>
<feature type="transmembrane region" description="Helical" evidence="1">
    <location>
        <begin position="366"/>
        <end position="386"/>
    </location>
</feature>
<feature type="transmembrane region" description="Helical" evidence="1">
    <location>
        <begin position="389"/>
        <end position="409"/>
    </location>
</feature>
<feature type="transmembrane region" description="Helical" evidence="1">
    <location>
        <begin position="423"/>
        <end position="443"/>
    </location>
</feature>
<proteinExistence type="inferred from homology"/>